<name>LEPA_XANOR</name>
<keyword id="KW-0997">Cell inner membrane</keyword>
<keyword id="KW-1003">Cell membrane</keyword>
<keyword id="KW-0342">GTP-binding</keyword>
<keyword id="KW-0378">Hydrolase</keyword>
<keyword id="KW-0472">Membrane</keyword>
<keyword id="KW-0547">Nucleotide-binding</keyword>
<keyword id="KW-0648">Protein biosynthesis</keyword>
<keyword id="KW-1185">Reference proteome</keyword>
<sequence length="601" mass="66226">MSSDSMRNIRNFSIIAHVDHGKSTLADRIIQLCGGLQAREMEAQVLDSNPIERERGITIKAQSVSLPYTAKDGQVYHLNFIDTPGHVDFSYEVSRSLAACEGALLVVDAAQGVEAQSVANCYTAVEQGLEVVPVLNKIDLPTADVDRAKAEIEAVIGIDAEDAVAVSAKTGLNIDLVLEAIVHRIPPPAPRDTDKLQALIIDSWFDNYLGVVSLVRVMQGEIKPGSKILVMSTGRTHLVDKVGVFTPKRKELSALGAGEVGWINASIKDVHGAPVGDTLTLAADPAPHALPGFQEMQPRVFAGLFPVDAEDYPDLREALDKLRLNDAALRFEPESSEAMGFGFRCGFLGMLHMEIVQERLEREYNLNLISTAPTVVYEVLKTDGSVIPMDNPSKLPPLNNVEEIREPIIRANILTPPDYVGNIITLCEEKRGSQIGINYLGSQVQISYELPMAEVVLDFFDKLKSVSRGYASLDYHFLRFDPGPFVRVDTLINGDKVDALSIIVHRSYADRRGRELCEKMKDLIPRQMFDVAIQAAVGSQIISRSTVKAMRKNVLAKCYGGDVSRKKKLLEKQKEGKKRMKQVGRVEIPQEAFLAVLQMDK</sequence>
<gene>
    <name evidence="1" type="primary">lepA</name>
    <name type="ordered locus">XOO1852</name>
</gene>
<proteinExistence type="inferred from homology"/>
<reference key="1">
    <citation type="journal article" date="2005" name="Nucleic Acids Res.">
        <title>The genome sequence of Xanthomonas oryzae pathovar oryzae KACC10331, the bacterial blight pathogen of rice.</title>
        <authorList>
            <person name="Lee B.-M."/>
            <person name="Park Y.-J."/>
            <person name="Park D.-S."/>
            <person name="Kang H.-W."/>
            <person name="Kim J.-G."/>
            <person name="Song E.-S."/>
            <person name="Park I.-C."/>
            <person name="Yoon U.-H."/>
            <person name="Hahn J.-H."/>
            <person name="Koo B.-S."/>
            <person name="Lee G.-B."/>
            <person name="Kim H."/>
            <person name="Park H.-S."/>
            <person name="Yoon K.-O."/>
            <person name="Kim J.-H."/>
            <person name="Jung C.-H."/>
            <person name="Koh N.-H."/>
            <person name="Seo J.-S."/>
            <person name="Go S.-J."/>
        </authorList>
    </citation>
    <scope>NUCLEOTIDE SEQUENCE [LARGE SCALE GENOMIC DNA]</scope>
    <source>
        <strain>KACC10331 / KXO85</strain>
    </source>
</reference>
<protein>
    <recommendedName>
        <fullName evidence="1">Elongation factor 4</fullName>
        <shortName evidence="1">EF-4</shortName>
        <ecNumber evidence="1">3.6.5.n1</ecNumber>
    </recommendedName>
    <alternativeName>
        <fullName evidence="1">Ribosomal back-translocase LepA</fullName>
    </alternativeName>
</protein>
<organism>
    <name type="scientific">Xanthomonas oryzae pv. oryzae (strain KACC10331 / KXO85)</name>
    <dbReference type="NCBI Taxonomy" id="291331"/>
    <lineage>
        <taxon>Bacteria</taxon>
        <taxon>Pseudomonadati</taxon>
        <taxon>Pseudomonadota</taxon>
        <taxon>Gammaproteobacteria</taxon>
        <taxon>Lysobacterales</taxon>
        <taxon>Lysobacteraceae</taxon>
        <taxon>Xanthomonas</taxon>
    </lineage>
</organism>
<evidence type="ECO:0000255" key="1">
    <source>
        <dbReference type="HAMAP-Rule" id="MF_00071"/>
    </source>
</evidence>
<comment type="function">
    <text evidence="1">Required for accurate and efficient protein synthesis under certain stress conditions. May act as a fidelity factor of the translation reaction, by catalyzing a one-codon backward translocation of tRNAs on improperly translocated ribosomes. Back-translocation proceeds from a post-translocation (POST) complex to a pre-translocation (PRE) complex, thus giving elongation factor G a second chance to translocate the tRNAs correctly. Binds to ribosomes in a GTP-dependent manner.</text>
</comment>
<comment type="catalytic activity">
    <reaction evidence="1">
        <text>GTP + H2O = GDP + phosphate + H(+)</text>
        <dbReference type="Rhea" id="RHEA:19669"/>
        <dbReference type="ChEBI" id="CHEBI:15377"/>
        <dbReference type="ChEBI" id="CHEBI:15378"/>
        <dbReference type="ChEBI" id="CHEBI:37565"/>
        <dbReference type="ChEBI" id="CHEBI:43474"/>
        <dbReference type="ChEBI" id="CHEBI:58189"/>
        <dbReference type="EC" id="3.6.5.n1"/>
    </reaction>
</comment>
<comment type="subcellular location">
    <subcellularLocation>
        <location evidence="1">Cell inner membrane</location>
        <topology evidence="1">Peripheral membrane protein</topology>
        <orientation evidence="1">Cytoplasmic side</orientation>
    </subcellularLocation>
</comment>
<comment type="similarity">
    <text evidence="1">Belongs to the TRAFAC class translation factor GTPase superfamily. Classic translation factor GTPase family. LepA subfamily.</text>
</comment>
<dbReference type="EC" id="3.6.5.n1" evidence="1"/>
<dbReference type="EMBL" id="AE013598">
    <property type="protein sequence ID" value="AAW75106.1"/>
    <property type="molecule type" value="Genomic_DNA"/>
</dbReference>
<dbReference type="SMR" id="Q5H1R5"/>
<dbReference type="STRING" id="291331.XOO1852"/>
<dbReference type="KEGG" id="xoo:XOO1852"/>
<dbReference type="HOGENOM" id="CLU_009995_3_3_6"/>
<dbReference type="Proteomes" id="UP000006735">
    <property type="component" value="Chromosome"/>
</dbReference>
<dbReference type="GO" id="GO:0005886">
    <property type="term" value="C:plasma membrane"/>
    <property type="evidence" value="ECO:0007669"/>
    <property type="project" value="UniProtKB-SubCell"/>
</dbReference>
<dbReference type="GO" id="GO:0005525">
    <property type="term" value="F:GTP binding"/>
    <property type="evidence" value="ECO:0007669"/>
    <property type="project" value="UniProtKB-UniRule"/>
</dbReference>
<dbReference type="GO" id="GO:0003924">
    <property type="term" value="F:GTPase activity"/>
    <property type="evidence" value="ECO:0007669"/>
    <property type="project" value="UniProtKB-UniRule"/>
</dbReference>
<dbReference type="GO" id="GO:0097216">
    <property type="term" value="F:guanosine tetraphosphate binding"/>
    <property type="evidence" value="ECO:0007669"/>
    <property type="project" value="UniProtKB-ARBA"/>
</dbReference>
<dbReference type="GO" id="GO:0043022">
    <property type="term" value="F:ribosome binding"/>
    <property type="evidence" value="ECO:0007669"/>
    <property type="project" value="UniProtKB-UniRule"/>
</dbReference>
<dbReference type="GO" id="GO:0003746">
    <property type="term" value="F:translation elongation factor activity"/>
    <property type="evidence" value="ECO:0007669"/>
    <property type="project" value="UniProtKB-UniRule"/>
</dbReference>
<dbReference type="GO" id="GO:0045727">
    <property type="term" value="P:positive regulation of translation"/>
    <property type="evidence" value="ECO:0007669"/>
    <property type="project" value="UniProtKB-UniRule"/>
</dbReference>
<dbReference type="CDD" id="cd03699">
    <property type="entry name" value="EF4_II"/>
    <property type="match status" value="1"/>
</dbReference>
<dbReference type="CDD" id="cd16260">
    <property type="entry name" value="EF4_III"/>
    <property type="match status" value="1"/>
</dbReference>
<dbReference type="CDD" id="cd01890">
    <property type="entry name" value="LepA"/>
    <property type="match status" value="1"/>
</dbReference>
<dbReference type="CDD" id="cd03709">
    <property type="entry name" value="lepA_C"/>
    <property type="match status" value="1"/>
</dbReference>
<dbReference type="FunFam" id="3.40.50.300:FF:000078">
    <property type="entry name" value="Elongation factor 4"/>
    <property type="match status" value="1"/>
</dbReference>
<dbReference type="FunFam" id="2.40.30.10:FF:000015">
    <property type="entry name" value="Translation factor GUF1, mitochondrial"/>
    <property type="match status" value="1"/>
</dbReference>
<dbReference type="FunFam" id="3.30.70.240:FF:000007">
    <property type="entry name" value="Translation factor GUF1, mitochondrial"/>
    <property type="match status" value="1"/>
</dbReference>
<dbReference type="FunFam" id="3.30.70.2570:FF:000001">
    <property type="entry name" value="Translation factor GUF1, mitochondrial"/>
    <property type="match status" value="1"/>
</dbReference>
<dbReference type="FunFam" id="3.30.70.870:FF:000004">
    <property type="entry name" value="Translation factor GUF1, mitochondrial"/>
    <property type="match status" value="1"/>
</dbReference>
<dbReference type="Gene3D" id="3.30.70.240">
    <property type="match status" value="1"/>
</dbReference>
<dbReference type="Gene3D" id="3.30.70.2570">
    <property type="entry name" value="Elongation factor 4, C-terminal domain"/>
    <property type="match status" value="1"/>
</dbReference>
<dbReference type="Gene3D" id="3.30.70.870">
    <property type="entry name" value="Elongation Factor G (Translational Gtpase), domain 3"/>
    <property type="match status" value="1"/>
</dbReference>
<dbReference type="Gene3D" id="3.40.50.300">
    <property type="entry name" value="P-loop containing nucleotide triphosphate hydrolases"/>
    <property type="match status" value="1"/>
</dbReference>
<dbReference type="Gene3D" id="2.40.30.10">
    <property type="entry name" value="Translation factors"/>
    <property type="match status" value="1"/>
</dbReference>
<dbReference type="HAMAP" id="MF_00071">
    <property type="entry name" value="LepA"/>
    <property type="match status" value="1"/>
</dbReference>
<dbReference type="InterPro" id="IPR006297">
    <property type="entry name" value="EF-4"/>
</dbReference>
<dbReference type="InterPro" id="IPR035647">
    <property type="entry name" value="EFG_III/V"/>
</dbReference>
<dbReference type="InterPro" id="IPR000640">
    <property type="entry name" value="EFG_V-like"/>
</dbReference>
<dbReference type="InterPro" id="IPR004161">
    <property type="entry name" value="EFTu-like_2"/>
</dbReference>
<dbReference type="InterPro" id="IPR031157">
    <property type="entry name" value="G_TR_CS"/>
</dbReference>
<dbReference type="InterPro" id="IPR038363">
    <property type="entry name" value="LepA_C_sf"/>
</dbReference>
<dbReference type="InterPro" id="IPR013842">
    <property type="entry name" value="LepA_CTD"/>
</dbReference>
<dbReference type="InterPro" id="IPR035654">
    <property type="entry name" value="LepA_IV"/>
</dbReference>
<dbReference type="InterPro" id="IPR027417">
    <property type="entry name" value="P-loop_NTPase"/>
</dbReference>
<dbReference type="InterPro" id="IPR005225">
    <property type="entry name" value="Small_GTP-bd"/>
</dbReference>
<dbReference type="InterPro" id="IPR000795">
    <property type="entry name" value="T_Tr_GTP-bd_dom"/>
</dbReference>
<dbReference type="NCBIfam" id="TIGR01393">
    <property type="entry name" value="lepA"/>
    <property type="match status" value="1"/>
</dbReference>
<dbReference type="NCBIfam" id="TIGR00231">
    <property type="entry name" value="small_GTP"/>
    <property type="match status" value="1"/>
</dbReference>
<dbReference type="PANTHER" id="PTHR43512:SF4">
    <property type="entry name" value="TRANSLATION FACTOR GUF1 HOMOLOG, CHLOROPLASTIC"/>
    <property type="match status" value="1"/>
</dbReference>
<dbReference type="PANTHER" id="PTHR43512">
    <property type="entry name" value="TRANSLATION FACTOR GUF1-RELATED"/>
    <property type="match status" value="1"/>
</dbReference>
<dbReference type="Pfam" id="PF00679">
    <property type="entry name" value="EFG_C"/>
    <property type="match status" value="1"/>
</dbReference>
<dbReference type="Pfam" id="PF00009">
    <property type="entry name" value="GTP_EFTU"/>
    <property type="match status" value="1"/>
</dbReference>
<dbReference type="Pfam" id="PF03144">
    <property type="entry name" value="GTP_EFTU_D2"/>
    <property type="match status" value="1"/>
</dbReference>
<dbReference type="Pfam" id="PF06421">
    <property type="entry name" value="LepA_C"/>
    <property type="match status" value="1"/>
</dbReference>
<dbReference type="PRINTS" id="PR00315">
    <property type="entry name" value="ELONGATNFCT"/>
</dbReference>
<dbReference type="SMART" id="SM00838">
    <property type="entry name" value="EFG_C"/>
    <property type="match status" value="1"/>
</dbReference>
<dbReference type="SUPFAM" id="SSF54980">
    <property type="entry name" value="EF-G C-terminal domain-like"/>
    <property type="match status" value="2"/>
</dbReference>
<dbReference type="SUPFAM" id="SSF52540">
    <property type="entry name" value="P-loop containing nucleoside triphosphate hydrolases"/>
    <property type="match status" value="1"/>
</dbReference>
<dbReference type="PROSITE" id="PS00301">
    <property type="entry name" value="G_TR_1"/>
    <property type="match status" value="1"/>
</dbReference>
<dbReference type="PROSITE" id="PS51722">
    <property type="entry name" value="G_TR_2"/>
    <property type="match status" value="1"/>
</dbReference>
<accession>Q5H1R5</accession>
<feature type="chain" id="PRO_0000224812" description="Elongation factor 4">
    <location>
        <begin position="1"/>
        <end position="601"/>
    </location>
</feature>
<feature type="domain" description="tr-type G">
    <location>
        <begin position="7"/>
        <end position="189"/>
    </location>
</feature>
<feature type="binding site" evidence="1">
    <location>
        <begin position="19"/>
        <end position="24"/>
    </location>
    <ligand>
        <name>GTP</name>
        <dbReference type="ChEBI" id="CHEBI:37565"/>
    </ligand>
</feature>
<feature type="binding site" evidence="1">
    <location>
        <begin position="136"/>
        <end position="139"/>
    </location>
    <ligand>
        <name>GTP</name>
        <dbReference type="ChEBI" id="CHEBI:37565"/>
    </ligand>
</feature>